<accession>A8G7R8</accession>
<gene>
    <name evidence="1" type="primary">ibpA</name>
    <name type="ordered locus">Spro_0048</name>
</gene>
<organism>
    <name type="scientific">Serratia proteamaculans (strain 568)</name>
    <dbReference type="NCBI Taxonomy" id="399741"/>
    <lineage>
        <taxon>Bacteria</taxon>
        <taxon>Pseudomonadati</taxon>
        <taxon>Pseudomonadota</taxon>
        <taxon>Gammaproteobacteria</taxon>
        <taxon>Enterobacterales</taxon>
        <taxon>Yersiniaceae</taxon>
        <taxon>Serratia</taxon>
    </lineage>
</organism>
<feature type="chain" id="PRO_1000070878" description="Small heat shock protein IbpA">
    <location>
        <begin position="1"/>
        <end position="137"/>
    </location>
</feature>
<feature type="domain" description="sHSP" evidence="2">
    <location>
        <begin position="28"/>
        <end position="137"/>
    </location>
</feature>
<evidence type="ECO:0000255" key="1">
    <source>
        <dbReference type="HAMAP-Rule" id="MF_02000"/>
    </source>
</evidence>
<evidence type="ECO:0000255" key="2">
    <source>
        <dbReference type="PROSITE-ProRule" id="PRU00285"/>
    </source>
</evidence>
<proteinExistence type="inferred from homology"/>
<dbReference type="EMBL" id="CP000826">
    <property type="protein sequence ID" value="ABV39158.1"/>
    <property type="molecule type" value="Genomic_DNA"/>
</dbReference>
<dbReference type="SMR" id="A8G7R8"/>
<dbReference type="STRING" id="399741.Spro_0048"/>
<dbReference type="KEGG" id="spe:Spro_0048"/>
<dbReference type="eggNOG" id="COG0071">
    <property type="taxonomic scope" value="Bacteria"/>
</dbReference>
<dbReference type="HOGENOM" id="CLU_046737_4_2_6"/>
<dbReference type="OrthoDB" id="6871152at2"/>
<dbReference type="GO" id="GO:0005737">
    <property type="term" value="C:cytoplasm"/>
    <property type="evidence" value="ECO:0007669"/>
    <property type="project" value="UniProtKB-SubCell"/>
</dbReference>
<dbReference type="GO" id="GO:0050821">
    <property type="term" value="P:protein stabilization"/>
    <property type="evidence" value="ECO:0007669"/>
    <property type="project" value="UniProtKB-UniRule"/>
</dbReference>
<dbReference type="CDD" id="cd06470">
    <property type="entry name" value="ACD_IbpA-B_like"/>
    <property type="match status" value="1"/>
</dbReference>
<dbReference type="FunFam" id="2.60.40.790:FF:000002">
    <property type="entry name" value="Small heat shock protein IbpA"/>
    <property type="match status" value="1"/>
</dbReference>
<dbReference type="Gene3D" id="2.60.40.790">
    <property type="match status" value="1"/>
</dbReference>
<dbReference type="HAMAP" id="MF_02000">
    <property type="entry name" value="HSP20_IbpA"/>
    <property type="match status" value="1"/>
</dbReference>
<dbReference type="InterPro" id="IPR002068">
    <property type="entry name" value="A-crystallin/Hsp20_dom"/>
</dbReference>
<dbReference type="InterPro" id="IPR037913">
    <property type="entry name" value="ACD_IbpA/B"/>
</dbReference>
<dbReference type="InterPro" id="IPR008978">
    <property type="entry name" value="HSP20-like_chaperone"/>
</dbReference>
<dbReference type="InterPro" id="IPR023728">
    <property type="entry name" value="HSP20_IbpA"/>
</dbReference>
<dbReference type="NCBIfam" id="NF008013">
    <property type="entry name" value="PRK10743.1"/>
    <property type="match status" value="1"/>
</dbReference>
<dbReference type="PANTHER" id="PTHR47062">
    <property type="match status" value="1"/>
</dbReference>
<dbReference type="PANTHER" id="PTHR47062:SF1">
    <property type="entry name" value="SMALL HEAT SHOCK PROTEIN IBPA"/>
    <property type="match status" value="1"/>
</dbReference>
<dbReference type="Pfam" id="PF00011">
    <property type="entry name" value="HSP20"/>
    <property type="match status" value="1"/>
</dbReference>
<dbReference type="SUPFAM" id="SSF49764">
    <property type="entry name" value="HSP20-like chaperones"/>
    <property type="match status" value="1"/>
</dbReference>
<dbReference type="PROSITE" id="PS01031">
    <property type="entry name" value="SHSP"/>
    <property type="match status" value="1"/>
</dbReference>
<keyword id="KW-0143">Chaperone</keyword>
<keyword id="KW-0963">Cytoplasm</keyword>
<keyword id="KW-0346">Stress response</keyword>
<protein>
    <recommendedName>
        <fullName evidence="1">Small heat shock protein IbpA</fullName>
    </recommendedName>
    <alternativeName>
        <fullName evidence="1">16 kDa heat shock protein A</fullName>
    </alternativeName>
</protein>
<reference key="1">
    <citation type="submission" date="2007-09" db="EMBL/GenBank/DDBJ databases">
        <title>Complete sequence of chromosome of Serratia proteamaculans 568.</title>
        <authorList>
            <consortium name="US DOE Joint Genome Institute"/>
            <person name="Copeland A."/>
            <person name="Lucas S."/>
            <person name="Lapidus A."/>
            <person name="Barry K."/>
            <person name="Glavina del Rio T."/>
            <person name="Dalin E."/>
            <person name="Tice H."/>
            <person name="Pitluck S."/>
            <person name="Chain P."/>
            <person name="Malfatti S."/>
            <person name="Shin M."/>
            <person name="Vergez L."/>
            <person name="Schmutz J."/>
            <person name="Larimer F."/>
            <person name="Land M."/>
            <person name="Hauser L."/>
            <person name="Kyrpides N."/>
            <person name="Kim E."/>
            <person name="Taghavi S."/>
            <person name="Newman L."/>
            <person name="Vangronsveld J."/>
            <person name="van der Lelie D."/>
            <person name="Richardson P."/>
        </authorList>
    </citation>
    <scope>NUCLEOTIDE SEQUENCE [LARGE SCALE GENOMIC DNA]</scope>
    <source>
        <strain>568</strain>
    </source>
</reference>
<sequence length="137" mass="15736">MRNFDLSPLYRSAIGFDRLFNALEAGQSQGNGGYPPYNVELVDENHYRIAIAVAGFAEQELEITTQDNLLIVRGAHNNEPAERTYLYQGIAERNFERKFQLAEHIQIKGAKLENGLLYIDMERIVPETLKPRRIEIK</sequence>
<name>IBPA_SERP5</name>
<comment type="function">
    <text evidence="1">Associates with aggregated proteins, together with IbpB, to stabilize and protect them from irreversible denaturation and extensive proteolysis during heat shock and oxidative stress. Aggregated proteins bound to the IbpAB complex are more efficiently refolded and reactivated by the ATP-dependent chaperone systems ClpB and DnaK/DnaJ/GrpE. Its activity is ATP-independent.</text>
</comment>
<comment type="subunit">
    <text evidence="1">Monomer. Forms homomultimers of about 100-150 subunits at optimal growth temperatures. Conformation changes to monomers at high temperatures or high ionic concentrations.</text>
</comment>
<comment type="subcellular location">
    <subcellularLocation>
        <location evidence="1">Cytoplasm</location>
    </subcellularLocation>
</comment>
<comment type="similarity">
    <text evidence="1 2">Belongs to the small heat shock protein (HSP20) family.</text>
</comment>